<keyword id="KW-0007">Acetylation</keyword>
<keyword id="KW-0460">Magnesium</keyword>
<keyword id="KW-0479">Metal-binding</keyword>
<keyword id="KW-0496">Mitochondrion</keyword>
<keyword id="KW-0560">Oxidoreductase</keyword>
<keyword id="KW-0597">Phosphoprotein</keyword>
<keyword id="KW-0630">Potassium</keyword>
<keyword id="KW-1185">Reference proteome</keyword>
<keyword id="KW-0786">Thiamine pyrophosphate</keyword>
<keyword id="KW-0809">Transit peptide</keyword>
<comment type="function">
    <text evidence="2">Together with BCKDHB forms the heterotetrameric E1 subunit of the mitochondrial branched-chain alpha-ketoacid dehydrogenase (BCKD) complex. The BCKD complex catalyzes the multi-step oxidative decarboxylation of alpha-ketoacids derived from the branched-chain amino-acids valine, leucine and isoleucine producing CO2 and acyl-CoA which is subsequently utilized to produce energy. The E1 subunit catalyzes the first step with the decarboxylation of the alpha-ketoacid forming an enzyme-product intermediate. A reductive acylation mediated by the lipoylamide cofactor of E2 extracts the acyl group from the E1 active site for the next step of the reaction.</text>
</comment>
<comment type="catalytic activity">
    <reaction evidence="2">
        <text>N(6)-[(R)-lipoyl]-L-lysyl-[protein] + 3-methyl-2-oxobutanoate + H(+) = N(6)-[(R)-S(8)-2-methylpropanoyldihydrolipoyl]-L-lysyl-[protein] + CO2</text>
        <dbReference type="Rhea" id="RHEA:13457"/>
        <dbReference type="Rhea" id="RHEA-COMP:10474"/>
        <dbReference type="Rhea" id="RHEA-COMP:10497"/>
        <dbReference type="ChEBI" id="CHEBI:11851"/>
        <dbReference type="ChEBI" id="CHEBI:15378"/>
        <dbReference type="ChEBI" id="CHEBI:16526"/>
        <dbReference type="ChEBI" id="CHEBI:83099"/>
        <dbReference type="ChEBI" id="CHEBI:83142"/>
        <dbReference type="EC" id="1.2.4.4"/>
    </reaction>
    <physiologicalReaction direction="left-to-right" evidence="2">
        <dbReference type="Rhea" id="RHEA:13458"/>
    </physiologicalReaction>
</comment>
<comment type="cofactor">
    <cofactor evidence="2">
        <name>thiamine diphosphate</name>
        <dbReference type="ChEBI" id="CHEBI:58937"/>
    </cofactor>
    <cofactor evidence="2">
        <name>Mg(2+)</name>
        <dbReference type="ChEBI" id="CHEBI:18420"/>
    </cofactor>
</comment>
<comment type="subunit">
    <text evidence="2">Heterotetramer of 2 alpha/BCKDHA and 2 beta chains/BCKDHB that forms the branched-chain alpha-keto acid decarboxylase (E1) component of the BCKD complex. The branched-chain alpha-ketoacid dehydrogenase is a large complex composed of three major building blocks E1, E2 and E3. It is organized around E2, a 24-meric cubic core composed of DBT, to which are associated 6 to 12 copies of E1, and approximately 6 copies of the dehydrogenase E3, a DLD dimer. Interacts with PPM1K.</text>
</comment>
<comment type="subcellular location">
    <subcellularLocation>
        <location evidence="2">Mitochondrion matrix</location>
    </subcellularLocation>
</comment>
<comment type="PTM">
    <text evidence="2">Phosphorylated at Ser-334 by BCKDK and dephosphorylated by protein phosphatase PPM1K.</text>
</comment>
<comment type="similarity">
    <text evidence="4">Belongs to the BCKDHA family.</text>
</comment>
<dbReference type="EC" id="1.2.4.4" evidence="2"/>
<dbReference type="EMBL" id="L47335">
    <property type="protein sequence ID" value="AAB38422.1"/>
    <property type="molecule type" value="mRNA"/>
</dbReference>
<dbReference type="PIR" id="S71881">
    <property type="entry name" value="S71881"/>
</dbReference>
<dbReference type="SMR" id="P50136"/>
<dbReference type="FunCoup" id="P50136">
    <property type="interactions" value="1299"/>
</dbReference>
<dbReference type="IntAct" id="P50136">
    <property type="interactions" value="2"/>
</dbReference>
<dbReference type="MINT" id="P50136"/>
<dbReference type="STRING" id="10090.ENSMUSP00000071292"/>
<dbReference type="GlyGen" id="P50136">
    <property type="glycosylation" value="1 site, 1 O-linked glycan (1 site)"/>
</dbReference>
<dbReference type="iPTMnet" id="P50136"/>
<dbReference type="PhosphoSitePlus" id="P50136"/>
<dbReference type="SwissPalm" id="P50136"/>
<dbReference type="jPOST" id="P50136"/>
<dbReference type="PaxDb" id="10090-ENSMUSP00000071292"/>
<dbReference type="PeptideAtlas" id="P50136"/>
<dbReference type="ProteomicsDB" id="293919"/>
<dbReference type="Pumba" id="P50136"/>
<dbReference type="AGR" id="MGI:107701"/>
<dbReference type="MGI" id="MGI:107701">
    <property type="gene designation" value="Bckdha"/>
</dbReference>
<dbReference type="eggNOG" id="KOG1182">
    <property type="taxonomic scope" value="Eukaryota"/>
</dbReference>
<dbReference type="InParanoid" id="P50136"/>
<dbReference type="PhylomeDB" id="P50136"/>
<dbReference type="Reactome" id="R-MMU-70895">
    <property type="pathway name" value="Branched-chain amino acid catabolism"/>
</dbReference>
<dbReference type="Reactome" id="R-MMU-9859138">
    <property type="pathway name" value="BCKDH synthesizes BCAA-CoA from KIC, KMVA, KIV"/>
</dbReference>
<dbReference type="ChiTaRS" id="Bckdha">
    <property type="organism name" value="mouse"/>
</dbReference>
<dbReference type="PRO" id="PR:P50136"/>
<dbReference type="Proteomes" id="UP000000589">
    <property type="component" value="Unplaced"/>
</dbReference>
<dbReference type="RNAct" id="P50136">
    <property type="molecule type" value="protein"/>
</dbReference>
<dbReference type="GO" id="GO:0160157">
    <property type="term" value="C:branched-chain alpha-ketoacid dehydrogenase complex"/>
    <property type="evidence" value="ECO:0000250"/>
    <property type="project" value="UniProtKB"/>
</dbReference>
<dbReference type="GO" id="GO:0005759">
    <property type="term" value="C:mitochondrial matrix"/>
    <property type="evidence" value="ECO:0007669"/>
    <property type="project" value="UniProtKB-SubCell"/>
</dbReference>
<dbReference type="GO" id="GO:0005739">
    <property type="term" value="C:mitochondrion"/>
    <property type="evidence" value="ECO:0007005"/>
    <property type="project" value="MGI"/>
</dbReference>
<dbReference type="GO" id="GO:0003863">
    <property type="term" value="F:3-methyl-2-oxobutanoate dehydrogenase (2-methylpropanoyl-transferring) activity"/>
    <property type="evidence" value="ECO:0000250"/>
    <property type="project" value="HGNC-UCL"/>
</dbReference>
<dbReference type="GO" id="GO:0046872">
    <property type="term" value="F:metal ion binding"/>
    <property type="evidence" value="ECO:0007669"/>
    <property type="project" value="UniProtKB-KW"/>
</dbReference>
<dbReference type="GO" id="GO:0009083">
    <property type="term" value="P:branched-chain amino acid catabolic process"/>
    <property type="evidence" value="ECO:0000250"/>
    <property type="project" value="UniProtKB"/>
</dbReference>
<dbReference type="CDD" id="cd02000">
    <property type="entry name" value="TPP_E1_PDC_ADC_BCADC"/>
    <property type="match status" value="1"/>
</dbReference>
<dbReference type="FunFam" id="3.40.50.970:FF:000015">
    <property type="entry name" value="2-oxoisovalerate dehydrogenase subunit alpha"/>
    <property type="match status" value="1"/>
</dbReference>
<dbReference type="Gene3D" id="3.40.50.970">
    <property type="match status" value="1"/>
</dbReference>
<dbReference type="InterPro" id="IPR050771">
    <property type="entry name" value="Alpha-ketoacid_DH_E1_comp"/>
</dbReference>
<dbReference type="InterPro" id="IPR001017">
    <property type="entry name" value="DH_E1"/>
</dbReference>
<dbReference type="InterPro" id="IPR029061">
    <property type="entry name" value="THDP-binding"/>
</dbReference>
<dbReference type="PANTHER" id="PTHR43380">
    <property type="entry name" value="2-OXOISOVALERATE DEHYDROGENASE SUBUNIT ALPHA, MITOCHONDRIAL"/>
    <property type="match status" value="1"/>
</dbReference>
<dbReference type="PANTHER" id="PTHR43380:SF1">
    <property type="entry name" value="2-OXOISOVALERATE DEHYDROGENASE SUBUNIT ALPHA, MITOCHONDRIAL"/>
    <property type="match status" value="1"/>
</dbReference>
<dbReference type="Pfam" id="PF00676">
    <property type="entry name" value="E1_dh"/>
    <property type="match status" value="1"/>
</dbReference>
<dbReference type="SUPFAM" id="SSF52518">
    <property type="entry name" value="Thiamin diphosphate-binding fold (THDP-binding)"/>
    <property type="match status" value="1"/>
</dbReference>
<accession>P50136</accession>
<organism>
    <name type="scientific">Mus musculus</name>
    <name type="common">Mouse</name>
    <dbReference type="NCBI Taxonomy" id="10090"/>
    <lineage>
        <taxon>Eukaryota</taxon>
        <taxon>Metazoa</taxon>
        <taxon>Chordata</taxon>
        <taxon>Craniata</taxon>
        <taxon>Vertebrata</taxon>
        <taxon>Euteleostomi</taxon>
        <taxon>Mammalia</taxon>
        <taxon>Eutheria</taxon>
        <taxon>Euarchontoglires</taxon>
        <taxon>Glires</taxon>
        <taxon>Rodentia</taxon>
        <taxon>Myomorpha</taxon>
        <taxon>Muroidea</taxon>
        <taxon>Muridae</taxon>
        <taxon>Murinae</taxon>
        <taxon>Mus</taxon>
        <taxon>Mus</taxon>
    </lineage>
</organism>
<gene>
    <name evidence="5" type="primary">Bckdha</name>
</gene>
<reference key="1">
    <citation type="journal article" date="1996" name="Biochem. J.">
        <title>Effects of insulin on the regulation of branched-chain alpha-keto acid dehydrogenase E1 alpha subunit gene expression.</title>
        <authorList>
            <person name="Costeas P.A."/>
            <person name="Chinsky J.M."/>
        </authorList>
    </citation>
    <scope>NUCLEOTIDE SEQUENCE [MRNA]</scope>
    <source>
        <strain>C57BL/6J</strain>
        <tissue>Liver</tissue>
    </source>
</reference>
<reference key="2">
    <citation type="journal article" date="2007" name="Mol. Cell. Proteomics">
        <title>Mitochondrial phosphoproteome revealed by an improved IMAC method and MS/MS/MS.</title>
        <authorList>
            <person name="Lee J."/>
            <person name="Xu Y."/>
            <person name="Chen Y."/>
            <person name="Sprung R."/>
            <person name="Kim S.C."/>
            <person name="Xie S."/>
            <person name="Zhao Y."/>
        </authorList>
    </citation>
    <scope>IDENTIFICATION BY MASS SPECTROMETRY [LARGE SCALE ANALYSIS]</scope>
    <source>
        <tissue>Liver</tissue>
    </source>
</reference>
<reference key="3">
    <citation type="journal article" date="2007" name="Proc. Natl. Acad. Sci. U.S.A.">
        <title>Large-scale phosphorylation analysis of mouse liver.</title>
        <authorList>
            <person name="Villen J."/>
            <person name="Beausoleil S.A."/>
            <person name="Gerber S.A."/>
            <person name="Gygi S.P."/>
        </authorList>
    </citation>
    <scope>IDENTIFICATION BY MASS SPECTROMETRY [LARGE SCALE ANALYSIS]</scope>
    <source>
        <tissue>Liver</tissue>
    </source>
</reference>
<reference key="4">
    <citation type="journal article" date="2009" name="Immunity">
        <title>The phagosomal proteome in interferon-gamma-activated macrophages.</title>
        <authorList>
            <person name="Trost M."/>
            <person name="English L."/>
            <person name="Lemieux S."/>
            <person name="Courcelles M."/>
            <person name="Desjardins M."/>
            <person name="Thibault P."/>
        </authorList>
    </citation>
    <scope>PHOSPHORYLATION [LARGE SCALE ANALYSIS] AT SER-334</scope>
    <scope>IDENTIFICATION BY MASS SPECTROMETRY [LARGE SCALE ANALYSIS]</scope>
</reference>
<reference key="5">
    <citation type="journal article" date="2010" name="Cell">
        <title>A tissue-specific atlas of mouse protein phosphorylation and expression.</title>
        <authorList>
            <person name="Huttlin E.L."/>
            <person name="Jedrychowski M.P."/>
            <person name="Elias J.E."/>
            <person name="Goswami T."/>
            <person name="Rad R."/>
            <person name="Beausoleil S.A."/>
            <person name="Villen J."/>
            <person name="Haas W."/>
            <person name="Sowa M.E."/>
            <person name="Gygi S.P."/>
        </authorList>
    </citation>
    <scope>PHOSPHORYLATION [LARGE SCALE ANALYSIS] AT SER-334; THR-335; SER-336 AND SER-344</scope>
    <scope>IDENTIFICATION BY MASS SPECTROMETRY [LARGE SCALE ANALYSIS]</scope>
    <source>
        <tissue>Brain</tissue>
        <tissue>Brown adipose tissue</tissue>
        <tissue>Heart</tissue>
        <tissue>Kidney</tissue>
        <tissue>Liver</tissue>
        <tissue>Lung</tissue>
        <tissue>Pancreas</tissue>
        <tissue>Spleen</tissue>
        <tissue>Testis</tissue>
    </source>
</reference>
<reference key="6">
    <citation type="journal article" date="2013" name="Mol. Cell">
        <title>SIRT5-mediated lysine desuccinylation impacts diverse metabolic pathways.</title>
        <authorList>
            <person name="Park J."/>
            <person name="Chen Y."/>
            <person name="Tishkoff D.X."/>
            <person name="Peng C."/>
            <person name="Tan M."/>
            <person name="Dai L."/>
            <person name="Xie Z."/>
            <person name="Zhang Y."/>
            <person name="Zwaans B.M."/>
            <person name="Skinner M.E."/>
            <person name="Lombard D.B."/>
            <person name="Zhao Y."/>
        </authorList>
    </citation>
    <scope>SUCCINYLATION [LARGE SCALE ANALYSIS] AT LYS-353 AND LYS-377</scope>
    <scope>IDENTIFICATION BY MASS SPECTROMETRY [LARGE SCALE ANALYSIS]</scope>
    <source>
        <tissue>Liver</tissue>
    </source>
</reference>
<reference key="7">
    <citation type="journal article" date="2013" name="Proc. Natl. Acad. Sci. U.S.A.">
        <title>Label-free quantitative proteomics of the lysine acetylome in mitochondria identifies substrates of SIRT3 in metabolic pathways.</title>
        <authorList>
            <person name="Rardin M.J."/>
            <person name="Newman J.C."/>
            <person name="Held J.M."/>
            <person name="Cusack M.P."/>
            <person name="Sorensen D.J."/>
            <person name="Li B."/>
            <person name="Schilling B."/>
            <person name="Mooney S.D."/>
            <person name="Kahn C.R."/>
            <person name="Verdin E."/>
            <person name="Gibson B.W."/>
        </authorList>
    </citation>
    <scope>ACETYLATION [LARGE SCALE ANALYSIS] AT LYS-353</scope>
    <scope>IDENTIFICATION BY MASS SPECTROMETRY [LARGE SCALE ANALYSIS]</scope>
    <source>
        <tissue>Liver</tissue>
    </source>
</reference>
<feature type="transit peptide" description="Mitochondrion" evidence="1">
    <location>
        <begin position="1"/>
        <end position="42"/>
    </location>
</feature>
<feature type="chain" id="PRO_0000020467" description="2-oxoisovalerate dehydrogenase subunit alpha, mitochondrial">
    <location>
        <begin position="43"/>
        <end position="442"/>
    </location>
</feature>
<feature type="region of interest" description="Disordered" evidence="3">
    <location>
        <begin position="30"/>
        <end position="50"/>
    </location>
</feature>
<feature type="binding site" evidence="2">
    <location>
        <position position="155"/>
    </location>
    <ligand>
        <name>thiamine diphosphate</name>
        <dbReference type="ChEBI" id="CHEBI:58937"/>
        <note>ligand shared with beta subunit</note>
    </ligand>
</feature>
<feature type="binding site" evidence="2">
    <location>
        <position position="156"/>
    </location>
    <ligand>
        <name>thiamine diphosphate</name>
        <dbReference type="ChEBI" id="CHEBI:58937"/>
        <note>ligand shared with beta subunit</note>
    </ligand>
</feature>
<feature type="binding site" evidence="2">
    <location>
        <position position="203"/>
    </location>
    <ligand>
        <name>K(+)</name>
        <dbReference type="ChEBI" id="CHEBI:29103"/>
        <note>structural</note>
    </ligand>
</feature>
<feature type="binding site" evidence="2">
    <location>
        <position position="204"/>
    </location>
    <ligand>
        <name>thiamine diphosphate</name>
        <dbReference type="ChEBI" id="CHEBI:58937"/>
        <note>ligand shared with beta subunit</note>
    </ligand>
</feature>
<feature type="binding site" evidence="2">
    <location>
        <position position="205"/>
    </location>
    <ligand>
        <name>K(+)</name>
        <dbReference type="ChEBI" id="CHEBI:29103"/>
        <note>structural</note>
    </ligand>
</feature>
<feature type="binding site" evidence="2">
    <location>
        <position position="208"/>
    </location>
    <ligand>
        <name>K(+)</name>
        <dbReference type="ChEBI" id="CHEBI:29103"/>
        <note>structural</note>
    </ligand>
</feature>
<feature type="binding site" evidence="2">
    <location>
        <position position="209"/>
    </location>
    <ligand>
        <name>K(+)</name>
        <dbReference type="ChEBI" id="CHEBI:29103"/>
        <note>structural</note>
    </ligand>
</feature>
<feature type="binding site" evidence="2">
    <location>
        <position position="235"/>
    </location>
    <ligand>
        <name>Mg(2+)</name>
        <dbReference type="ChEBI" id="CHEBI:18420"/>
    </ligand>
</feature>
<feature type="binding site" evidence="2">
    <location>
        <position position="236"/>
    </location>
    <ligand>
        <name>thiamine diphosphate</name>
        <dbReference type="ChEBI" id="CHEBI:58937"/>
        <note>ligand shared with beta subunit</note>
    </ligand>
</feature>
<feature type="binding site" evidence="2">
    <location>
        <position position="237"/>
    </location>
    <ligand>
        <name>thiamine diphosphate</name>
        <dbReference type="ChEBI" id="CHEBI:58937"/>
        <note>ligand shared with beta subunit</note>
    </ligand>
</feature>
<feature type="binding site" evidence="2">
    <location>
        <position position="262"/>
    </location>
    <ligand>
        <name>thiamine diphosphate</name>
        <dbReference type="ChEBI" id="CHEBI:58937"/>
        <note>ligand shared with beta subunit</note>
    </ligand>
</feature>
<feature type="binding site" evidence="2">
    <location>
        <position position="264"/>
    </location>
    <ligand>
        <name>Mg(2+)</name>
        <dbReference type="ChEBI" id="CHEBI:18420"/>
    </ligand>
</feature>
<feature type="binding site" evidence="2">
    <location>
        <position position="266"/>
    </location>
    <ligand>
        <name>Mg(2+)</name>
        <dbReference type="ChEBI" id="CHEBI:18420"/>
    </ligand>
</feature>
<feature type="binding site" evidence="2">
    <location>
        <position position="333"/>
    </location>
    <ligand>
        <name>thiamine diphosphate</name>
        <dbReference type="ChEBI" id="CHEBI:58937"/>
        <note>ligand shared with beta subunit</note>
    </ligand>
</feature>
<feature type="modified residue" description="Phosphoserine; by BCKDK" evidence="2 6 7">
    <location>
        <position position="334"/>
    </location>
</feature>
<feature type="modified residue" description="Phosphothreonine" evidence="7">
    <location>
        <position position="335"/>
    </location>
</feature>
<feature type="modified residue" description="Phosphoserine" evidence="7">
    <location>
        <position position="336"/>
    </location>
</feature>
<feature type="modified residue" description="Phosphoserine" evidence="7">
    <location>
        <position position="344"/>
    </location>
</feature>
<feature type="modified residue" description="N6-acetyllysine; alternate" evidence="8">
    <location>
        <position position="353"/>
    </location>
</feature>
<feature type="modified residue" description="N6-succinyllysine; alternate" evidence="9">
    <location>
        <position position="353"/>
    </location>
</feature>
<feature type="modified residue" description="N6-succinyllysine" evidence="9">
    <location>
        <position position="377"/>
    </location>
</feature>
<name>ODBA_MOUSE</name>
<sequence>MSAAKIWRPSRGLRQAALLLLGRSGVRGLARSHPSRQQQQQFPSLDDKPQFPGASAEFVDKLEFIQPNVISGIPIYRVMDRQGQIINPSEDPHLPQEEVLKFYRSMTLLNTMDRILYESQREGRISFYMTNYGEEGTHVGSAAALERTDLVFGQYREAGVLMYRDYPLELFMSQCYGNVNDPGKGRQMPVHYGCKERHFVTISSPLATQIPQAVGAAYAAKRANANRIVICYFGEGAASEGDAHAGFNFAATLECPIIFFCRNNGYAISTPTSEQYRGDGIAARGPGYGIKSIRVDGNDVFAVYNATKEARRRAVAENQPFLIEAMTYRIGHHSTSDDSSAYRSVDEVNYWDKQDHPISRLRQYLLNQGWWDEEQEKAWRKQSRKKVMEAFEQAERKLKPNPSLLFSDVYQEMPAQLRRQQESLARHLQTYGEHYPLDHFEK</sequence>
<evidence type="ECO:0000250" key="1"/>
<evidence type="ECO:0000250" key="2">
    <source>
        <dbReference type="UniProtKB" id="P12694"/>
    </source>
</evidence>
<evidence type="ECO:0000256" key="3">
    <source>
        <dbReference type="SAM" id="MobiDB-lite"/>
    </source>
</evidence>
<evidence type="ECO:0000305" key="4"/>
<evidence type="ECO:0000312" key="5">
    <source>
        <dbReference type="MGI" id="MGI:107701"/>
    </source>
</evidence>
<evidence type="ECO:0007744" key="6">
    <source>
    </source>
</evidence>
<evidence type="ECO:0007744" key="7">
    <source>
    </source>
</evidence>
<evidence type="ECO:0007744" key="8">
    <source>
    </source>
</evidence>
<evidence type="ECO:0007744" key="9">
    <source>
    </source>
</evidence>
<protein>
    <recommendedName>
        <fullName evidence="2">2-oxoisovalerate dehydrogenase subunit alpha, mitochondrial</fullName>
        <ecNumber evidence="2">1.2.4.4</ecNumber>
    </recommendedName>
    <alternativeName>
        <fullName>Branched-chain alpha-keto acid dehydrogenase E1 component alpha chain</fullName>
        <shortName>BCKDE1A</shortName>
        <shortName>BCKDH E1-alpha</shortName>
    </alternativeName>
</protein>
<proteinExistence type="evidence at protein level"/>